<evidence type="ECO:0000255" key="1">
    <source>
        <dbReference type="HAMAP-Rule" id="MF_00362"/>
    </source>
</evidence>
<evidence type="ECO:0000305" key="2"/>
<proteinExistence type="inferred from homology"/>
<keyword id="KW-0687">Ribonucleoprotein</keyword>
<keyword id="KW-0689">Ribosomal protein</keyword>
<keyword id="KW-0694">RNA-binding</keyword>
<keyword id="KW-0699">rRNA-binding</keyword>
<accession>Q724G2</accession>
<reference key="1">
    <citation type="journal article" date="2004" name="Nucleic Acids Res.">
        <title>Whole genome comparisons of serotype 4b and 1/2a strains of the food-borne pathogen Listeria monocytogenes reveal new insights into the core genome components of this species.</title>
        <authorList>
            <person name="Nelson K.E."/>
            <person name="Fouts D.E."/>
            <person name="Mongodin E.F."/>
            <person name="Ravel J."/>
            <person name="DeBoy R.T."/>
            <person name="Kolonay J.F."/>
            <person name="Rasko D.A."/>
            <person name="Angiuoli S.V."/>
            <person name="Gill S.R."/>
            <person name="Paulsen I.T."/>
            <person name="Peterson J.D."/>
            <person name="White O."/>
            <person name="Nelson W.C."/>
            <person name="Nierman W.C."/>
            <person name="Beanan M.J."/>
            <person name="Brinkac L.M."/>
            <person name="Daugherty S.C."/>
            <person name="Dodson R.J."/>
            <person name="Durkin A.S."/>
            <person name="Madupu R."/>
            <person name="Haft D.H."/>
            <person name="Selengut J."/>
            <person name="Van Aken S.E."/>
            <person name="Khouri H.M."/>
            <person name="Fedorova N."/>
            <person name="Forberger H.A."/>
            <person name="Tran B."/>
            <person name="Kathariou S."/>
            <person name="Wonderling L.D."/>
            <person name="Uhlich G.A."/>
            <person name="Bayles D.O."/>
            <person name="Luchansky J.B."/>
            <person name="Fraser C.M."/>
        </authorList>
    </citation>
    <scope>NUCLEOTIDE SEQUENCE [LARGE SCALE GENOMIC DNA]</scope>
    <source>
        <strain>F2365</strain>
    </source>
</reference>
<protein>
    <recommendedName>
        <fullName evidence="1">Large ribosomal subunit protein uL10</fullName>
    </recommendedName>
    <alternativeName>
        <fullName evidence="2">50S ribosomal protein L10</fullName>
    </alternativeName>
</protein>
<dbReference type="EMBL" id="AE017262">
    <property type="protein sequence ID" value="AAT03049.1"/>
    <property type="molecule type" value="Genomic_DNA"/>
</dbReference>
<dbReference type="RefSeq" id="WP_003723030.1">
    <property type="nucleotide sequence ID" value="NC_002973.6"/>
</dbReference>
<dbReference type="SMR" id="Q724G2"/>
<dbReference type="GeneID" id="93238164"/>
<dbReference type="KEGG" id="lmf:LMOf2365_0262"/>
<dbReference type="HOGENOM" id="CLU_092227_2_0_9"/>
<dbReference type="GO" id="GO:0015934">
    <property type="term" value="C:large ribosomal subunit"/>
    <property type="evidence" value="ECO:0007669"/>
    <property type="project" value="InterPro"/>
</dbReference>
<dbReference type="GO" id="GO:0070180">
    <property type="term" value="F:large ribosomal subunit rRNA binding"/>
    <property type="evidence" value="ECO:0007669"/>
    <property type="project" value="UniProtKB-UniRule"/>
</dbReference>
<dbReference type="GO" id="GO:0003735">
    <property type="term" value="F:structural constituent of ribosome"/>
    <property type="evidence" value="ECO:0007669"/>
    <property type="project" value="InterPro"/>
</dbReference>
<dbReference type="GO" id="GO:0006412">
    <property type="term" value="P:translation"/>
    <property type="evidence" value="ECO:0007669"/>
    <property type="project" value="UniProtKB-UniRule"/>
</dbReference>
<dbReference type="CDD" id="cd05797">
    <property type="entry name" value="Ribosomal_L10"/>
    <property type="match status" value="1"/>
</dbReference>
<dbReference type="FunFam" id="3.30.70.1730:FF:000001">
    <property type="entry name" value="50S ribosomal protein L10"/>
    <property type="match status" value="1"/>
</dbReference>
<dbReference type="Gene3D" id="3.30.70.1730">
    <property type="match status" value="1"/>
</dbReference>
<dbReference type="HAMAP" id="MF_00362">
    <property type="entry name" value="Ribosomal_uL10"/>
    <property type="match status" value="1"/>
</dbReference>
<dbReference type="InterPro" id="IPR001790">
    <property type="entry name" value="Ribosomal_uL10"/>
</dbReference>
<dbReference type="InterPro" id="IPR043141">
    <property type="entry name" value="Ribosomal_uL10-like_sf"/>
</dbReference>
<dbReference type="InterPro" id="IPR022973">
    <property type="entry name" value="Ribosomal_uL10_bac"/>
</dbReference>
<dbReference type="InterPro" id="IPR047865">
    <property type="entry name" value="Ribosomal_uL10_bac_type"/>
</dbReference>
<dbReference type="InterPro" id="IPR002363">
    <property type="entry name" value="Ribosomal_uL10_CS_bac"/>
</dbReference>
<dbReference type="NCBIfam" id="NF000955">
    <property type="entry name" value="PRK00099.1-1"/>
    <property type="match status" value="1"/>
</dbReference>
<dbReference type="PANTHER" id="PTHR11560">
    <property type="entry name" value="39S RIBOSOMAL PROTEIN L10, MITOCHONDRIAL"/>
    <property type="match status" value="1"/>
</dbReference>
<dbReference type="Pfam" id="PF00466">
    <property type="entry name" value="Ribosomal_L10"/>
    <property type="match status" value="1"/>
</dbReference>
<dbReference type="SUPFAM" id="SSF160369">
    <property type="entry name" value="Ribosomal protein L10-like"/>
    <property type="match status" value="1"/>
</dbReference>
<dbReference type="PROSITE" id="PS01109">
    <property type="entry name" value="RIBOSOMAL_L10"/>
    <property type="match status" value="1"/>
</dbReference>
<comment type="function">
    <text evidence="1">Forms part of the ribosomal stalk, playing a central role in the interaction of the ribosome with GTP-bound translation factors.</text>
</comment>
<comment type="subunit">
    <text evidence="1">Part of the ribosomal stalk of the 50S ribosomal subunit. The N-terminus interacts with L11 and the large rRNA to form the base of the stalk. The C-terminus forms an elongated spine to which L12 dimers bind in a sequential fashion forming a multimeric L10(L12)X complex.</text>
</comment>
<comment type="similarity">
    <text evidence="1">Belongs to the universal ribosomal protein uL10 family.</text>
</comment>
<name>RL10_LISMF</name>
<feature type="chain" id="PRO_0000154658" description="Large ribosomal subunit protein uL10">
    <location>
        <begin position="1"/>
        <end position="166"/>
    </location>
</feature>
<sequence>MSKVLEAKQSAVEEIKTKLSASASTVIVDYRGLNVGEITELRKQLRDAGIEFKVYKNSLTRRAVEANGYEGLEGALTGPNAIAFSNEDVVAPAKILNDFAKDHEALEIKAGVIEGKVASLEEIKALATLPSREGLLSMLCNVLQAPVRGLAIATKAVADQKEGQEA</sequence>
<gene>
    <name evidence="1" type="primary">rplJ</name>
    <name type="ordered locus">LMOf2365_0262</name>
</gene>
<organism>
    <name type="scientific">Listeria monocytogenes serotype 4b (strain F2365)</name>
    <dbReference type="NCBI Taxonomy" id="265669"/>
    <lineage>
        <taxon>Bacteria</taxon>
        <taxon>Bacillati</taxon>
        <taxon>Bacillota</taxon>
        <taxon>Bacilli</taxon>
        <taxon>Bacillales</taxon>
        <taxon>Listeriaceae</taxon>
        <taxon>Listeria</taxon>
    </lineage>
</organism>